<protein>
    <recommendedName>
        <fullName>Uncharacterized protein R608</fullName>
    </recommendedName>
</protein>
<proteinExistence type="predicted"/>
<accession>Q5UP68</accession>
<organismHost>
    <name type="scientific">Acanthamoeba polyphaga</name>
    <name type="common">Amoeba</name>
    <dbReference type="NCBI Taxonomy" id="5757"/>
</organismHost>
<sequence length="246" mass="28134">MSKNNRKSPSESATLFKVGTIATGNDKNKWIVKETSNGVKRWTKFIPNSNIKIRNNELVSFNFNFIEKLFPKQTKHIGDIFINSNKIGVGELLFWPMNTQKGLYNIFNLKGCLIAVHNNVSLFDQKFTISDKFADCDIGMFSFNDYVNIEPYLQKNKIKKSSGFGLKFPEFSTKHFSFTGSKPNYVYLEDLEDFVDDESESVTKLNDPIAVFVDNKFGDGSFPIYVGKNAFFIMNPDVMDIMINNQ</sequence>
<keyword id="KW-1185">Reference proteome</keyword>
<reference key="1">
    <citation type="journal article" date="2004" name="Science">
        <title>The 1.2-megabase genome sequence of Mimivirus.</title>
        <authorList>
            <person name="Raoult D."/>
            <person name="Audic S."/>
            <person name="Robert C."/>
            <person name="Abergel C."/>
            <person name="Renesto P."/>
            <person name="Ogata H."/>
            <person name="La Scola B."/>
            <person name="Susan M."/>
            <person name="Claverie J.-M."/>
        </authorList>
    </citation>
    <scope>NUCLEOTIDE SEQUENCE [LARGE SCALE GENOMIC DNA]</scope>
    <source>
        <strain>Rowbotham-Bradford</strain>
    </source>
</reference>
<organism>
    <name type="scientific">Acanthamoeba polyphaga mimivirus</name>
    <name type="common">APMV</name>
    <dbReference type="NCBI Taxonomy" id="212035"/>
    <lineage>
        <taxon>Viruses</taxon>
        <taxon>Varidnaviria</taxon>
        <taxon>Bamfordvirae</taxon>
        <taxon>Nucleocytoviricota</taxon>
        <taxon>Megaviricetes</taxon>
        <taxon>Imitervirales</taxon>
        <taxon>Mimiviridae</taxon>
        <taxon>Megamimivirinae</taxon>
        <taxon>Mimivirus</taxon>
        <taxon>Mimivirus bradfordmassiliense</taxon>
    </lineage>
</organism>
<name>YR608_MIMIV</name>
<dbReference type="EMBL" id="AY653733">
    <property type="protein sequence ID" value="AAV50871.1"/>
    <property type="molecule type" value="Genomic_DNA"/>
</dbReference>
<dbReference type="KEGG" id="vg:9925248"/>
<dbReference type="Proteomes" id="UP000001134">
    <property type="component" value="Genome"/>
</dbReference>
<gene>
    <name type="ordered locus">MIMI_R608</name>
</gene>
<feature type="chain" id="PRO_0000253425" description="Uncharacterized protein R608">
    <location>
        <begin position="1"/>
        <end position="246"/>
    </location>
</feature>